<feature type="chain" id="PRO_0000420589" description="Decaprenylphosphoryl-5-phosphoribose phosphatase">
    <location>
        <begin position="1"/>
        <end position="180"/>
    </location>
</feature>
<feature type="transmembrane region" description="Helical" evidence="1">
    <location>
        <begin position="31"/>
        <end position="51"/>
    </location>
</feature>
<feature type="transmembrane region" description="Helical" evidence="1">
    <location>
        <begin position="61"/>
        <end position="81"/>
    </location>
</feature>
<feature type="transmembrane region" description="Helical" evidence="1">
    <location>
        <begin position="116"/>
        <end position="136"/>
    </location>
</feature>
<feature type="transmembrane region" description="Helical" evidence="1">
    <location>
        <begin position="139"/>
        <end position="159"/>
    </location>
</feature>
<protein>
    <recommendedName>
        <fullName evidence="5">Decaprenylphosphoryl-5-phosphoribose phosphatase</fullName>
        <shortName evidence="5">DPPR phosphatase</shortName>
        <ecNumber evidence="3">3.1.3.111</ecNumber>
    </recommendedName>
    <alternativeName>
        <fullName evidence="4">Phospholipid phosphatase</fullName>
    </alternativeName>
</protein>
<proteinExistence type="evidence at protein level"/>
<gene>
    <name type="ordered locus">MSMEG_6402</name>
    <name type="ordered locus">MSMEI_6234</name>
</gene>
<reference key="1">
    <citation type="submission" date="2006-10" db="EMBL/GenBank/DDBJ databases">
        <authorList>
            <person name="Fleischmann R.D."/>
            <person name="Dodson R.J."/>
            <person name="Haft D.H."/>
            <person name="Merkel J.S."/>
            <person name="Nelson W.C."/>
            <person name="Fraser C.M."/>
        </authorList>
    </citation>
    <scope>NUCLEOTIDE SEQUENCE [LARGE SCALE GENOMIC DNA]</scope>
    <source>
        <strain>ATCC 700084 / mc(2)155</strain>
    </source>
</reference>
<reference key="2">
    <citation type="journal article" date="2007" name="Genome Biol.">
        <title>Interrupted coding sequences in Mycobacterium smegmatis: authentic mutations or sequencing errors?</title>
        <authorList>
            <person name="Deshayes C."/>
            <person name="Perrodou E."/>
            <person name="Gallien S."/>
            <person name="Euphrasie D."/>
            <person name="Schaeffer C."/>
            <person name="Van-Dorsselaer A."/>
            <person name="Poch O."/>
            <person name="Lecompte O."/>
            <person name="Reyrat J.-M."/>
        </authorList>
    </citation>
    <scope>NUCLEOTIDE SEQUENCE [LARGE SCALE GENOMIC DNA]</scope>
    <source>
        <strain>ATCC 700084 / mc(2)155</strain>
    </source>
</reference>
<reference key="3">
    <citation type="journal article" date="2009" name="Genome Res.">
        <title>Ortho-proteogenomics: multiple proteomes investigation through orthology and a new MS-based protocol.</title>
        <authorList>
            <person name="Gallien S."/>
            <person name="Perrodou E."/>
            <person name="Carapito C."/>
            <person name="Deshayes C."/>
            <person name="Reyrat J.-M."/>
            <person name="Van Dorsselaer A."/>
            <person name="Poch O."/>
            <person name="Schaeffer C."/>
            <person name="Lecompte O."/>
        </authorList>
    </citation>
    <scope>NUCLEOTIDE SEQUENCE [LARGE SCALE GENOMIC DNA]</scope>
    <source>
        <strain>ATCC 700084 / mc(2)155</strain>
    </source>
</reference>
<reference key="4">
    <citation type="journal article" date="2011" name="Microb. Pathog.">
        <title>The effect of MSMEG_6402 gene disruption on the cell wall structure of Mycobacterium smegmatis.</title>
        <authorList>
            <person name="Jiang T."/>
            <person name="He L."/>
            <person name="Zhan Y."/>
            <person name="Zang S."/>
            <person name="Ma Y."/>
            <person name="Zhao X."/>
            <person name="Zhang C."/>
            <person name="Xin Y."/>
        </authorList>
    </citation>
    <scope>DISRUPTION PHENOTYPE</scope>
    <source>
        <strain>ATCC 700084 / mc(2)155</strain>
    </source>
</reference>
<reference key="5">
    <citation type="journal article" date="2014" name="Microb. Pathog.">
        <title>Functional identification of MSMEG_6402 protein from Mycobacterium smegmatis in decaprenylphosphoryl-D-arabinose biosynthesis.</title>
        <authorList>
            <person name="Jiang T."/>
            <person name="Cai L."/>
            <person name="Zhao X."/>
            <person name="He L."/>
            <person name="Ma Y."/>
            <person name="Zang S."/>
            <person name="Zhang C."/>
            <person name="Li X."/>
            <person name="Xin Y."/>
        </authorList>
    </citation>
    <scope>FUNCTION</scope>
    <scope>CATALYTIC ACTIVITY</scope>
    <scope>PATHWAY</scope>
    <source>
        <strain>ATCC 700084 / mc(2)155</strain>
    </source>
</reference>
<sequence length="180" mass="17975">MSDAPRGEDAVLVAVQAALAGRPGVLTGARALSHFGEHSAGWVALAAAGALAQPAKRRSWLAVGAGAFLAHAAAVVIKRVVRRERPSHPDIAVNVGTPSRLSFPSAHATSTTAAAVLLAQTTGVPAPALLVPPMALSRLVLGVHYPTDVVTGVVVGALVGKAVGKAAGRISNSVGAEGDR</sequence>
<comment type="function">
    <text evidence="3">Phosphatase involved in the biosynthesis of decaprenylphosphoryl arabinose (DPA), which serves as the arabinose donor for the biosynthesis of arabinogalactan, the major mycobacterial cell wall polysaccharide (PubMed:25223716). Catalyzes the dephosphorylation of decaprenylphosphoryl-5-phosphoribose (DPPR) to decaprenyl-phosphoribose (DPR) (PubMed:25223716).</text>
</comment>
<comment type="catalytic activity">
    <reaction evidence="3">
        <text>trans,octa-cis-decaprenylphospho-beta-D-ribofuranose 5-phosphate + H2O = trans,octa-cis-decaprenylphospho-beta-D-ribofuranose + phosphate</text>
        <dbReference type="Rhea" id="RHEA:80895"/>
        <dbReference type="ChEBI" id="CHEBI:15377"/>
        <dbReference type="ChEBI" id="CHEBI:43474"/>
        <dbReference type="ChEBI" id="CHEBI:66881"/>
        <dbReference type="ChEBI" id="CHEBI:66937"/>
        <dbReference type="EC" id="3.1.3.111"/>
    </reaction>
    <physiologicalReaction direction="left-to-right" evidence="3">
        <dbReference type="Rhea" id="RHEA:80896"/>
    </physiologicalReaction>
</comment>
<comment type="pathway">
    <text evidence="3">Cell wall biogenesis; cell wall polysaccharide biosynthesis.</text>
</comment>
<comment type="subcellular location">
    <subcellularLocation>
        <location evidence="6">Cell membrane</location>
        <topology evidence="1">Multi-pass membrane protein</topology>
    </subcellularLocation>
</comment>
<comment type="disruption phenotype">
    <text evidence="2">Non-essential, can be deleted, but cells laking this gene show a reduced growth rate (PubMed:21575707). Deformation and bulge on the side of mutant cells are observed (PubMed:21575707). The cytoplasm is detached from the cell wall and possesses a discrepancy density compared to wild-type cells (PubMed:21575707). The content of D-arabinofuran residues (Araf) is reduced significantly (PubMed:21575707).</text>
</comment>
<comment type="similarity">
    <text evidence="5">Belongs to the PA-phosphatase related phosphoesterase family.</text>
</comment>
<keyword id="KW-1003">Cell membrane</keyword>
<keyword id="KW-0961">Cell wall biogenesis/degradation</keyword>
<keyword id="KW-0378">Hydrolase</keyword>
<keyword id="KW-0472">Membrane</keyword>
<keyword id="KW-1185">Reference proteome</keyword>
<keyword id="KW-0812">Transmembrane</keyword>
<keyword id="KW-1133">Transmembrane helix</keyword>
<evidence type="ECO:0000255" key="1"/>
<evidence type="ECO:0000269" key="2">
    <source>
    </source>
</evidence>
<evidence type="ECO:0000269" key="3">
    <source>
    </source>
</evidence>
<evidence type="ECO:0000303" key="4">
    <source>
    </source>
</evidence>
<evidence type="ECO:0000305" key="5"/>
<evidence type="ECO:0000305" key="6">
    <source>
    </source>
</evidence>
<organism>
    <name type="scientific">Mycolicibacterium smegmatis (strain ATCC 700084 / mc(2)155)</name>
    <name type="common">Mycobacterium smegmatis</name>
    <dbReference type="NCBI Taxonomy" id="246196"/>
    <lineage>
        <taxon>Bacteria</taxon>
        <taxon>Bacillati</taxon>
        <taxon>Actinomycetota</taxon>
        <taxon>Actinomycetes</taxon>
        <taxon>Mycobacteriales</taxon>
        <taxon>Mycobacteriaceae</taxon>
        <taxon>Mycolicibacterium</taxon>
    </lineage>
</organism>
<name>DPRP_MYCS2</name>
<dbReference type="EC" id="3.1.3.111" evidence="3"/>
<dbReference type="EMBL" id="CP000480">
    <property type="protein sequence ID" value="ABK71187.1"/>
    <property type="molecule type" value="Genomic_DNA"/>
</dbReference>
<dbReference type="EMBL" id="CP001663">
    <property type="protein sequence ID" value="AFP42660.1"/>
    <property type="molecule type" value="Genomic_DNA"/>
</dbReference>
<dbReference type="RefSeq" id="WP_003897811.1">
    <property type="nucleotide sequence ID" value="NZ_SIJM01000013.1"/>
</dbReference>
<dbReference type="RefSeq" id="YP_890615.1">
    <property type="nucleotide sequence ID" value="NC_008596.1"/>
</dbReference>
<dbReference type="SMR" id="A0R627"/>
<dbReference type="STRING" id="246196.MSMEG_6402"/>
<dbReference type="PaxDb" id="246196-MSMEI_6234"/>
<dbReference type="KEGG" id="msb:LJ00_31645"/>
<dbReference type="KEGG" id="msg:MSMEI_6234"/>
<dbReference type="KEGG" id="msm:MSMEG_6402"/>
<dbReference type="PATRIC" id="fig|246196.19.peg.6228"/>
<dbReference type="eggNOG" id="COG0671">
    <property type="taxonomic scope" value="Bacteria"/>
</dbReference>
<dbReference type="UniPathway" id="UPA00963"/>
<dbReference type="Proteomes" id="UP000000757">
    <property type="component" value="Chromosome"/>
</dbReference>
<dbReference type="Proteomes" id="UP000006158">
    <property type="component" value="Chromosome"/>
</dbReference>
<dbReference type="GO" id="GO:0016020">
    <property type="term" value="C:membrane"/>
    <property type="evidence" value="ECO:0007669"/>
    <property type="project" value="UniProtKB-SubCell"/>
</dbReference>
<dbReference type="GO" id="GO:0016787">
    <property type="term" value="F:hydrolase activity"/>
    <property type="evidence" value="ECO:0007669"/>
    <property type="project" value="UniProtKB-KW"/>
</dbReference>
<dbReference type="GO" id="GO:0045227">
    <property type="term" value="P:capsule polysaccharide biosynthetic process"/>
    <property type="evidence" value="ECO:0007669"/>
    <property type="project" value="UniProtKB-UniPathway"/>
</dbReference>
<dbReference type="GO" id="GO:0071555">
    <property type="term" value="P:cell wall organization"/>
    <property type="evidence" value="ECO:0007669"/>
    <property type="project" value="UniProtKB-KW"/>
</dbReference>
<dbReference type="Gene3D" id="1.20.144.10">
    <property type="entry name" value="Phosphatidic acid phosphatase type 2/haloperoxidase"/>
    <property type="match status" value="1"/>
</dbReference>
<dbReference type="InterPro" id="IPR036938">
    <property type="entry name" value="P_Acid_Pase_2/haloperoxi_sf"/>
</dbReference>
<dbReference type="InterPro" id="IPR000326">
    <property type="entry name" value="P_Acid_Pase_2/haloperoxidase"/>
</dbReference>
<dbReference type="PANTHER" id="PTHR14969:SF62">
    <property type="entry name" value="DECAPRENYLPHOSPHORYL-5-PHOSPHORIBOSE PHOSPHATASE RV3807C-RELATED"/>
    <property type="match status" value="1"/>
</dbReference>
<dbReference type="PANTHER" id="PTHR14969">
    <property type="entry name" value="SPHINGOSINE-1-PHOSPHATE PHOSPHOHYDROLASE"/>
    <property type="match status" value="1"/>
</dbReference>
<dbReference type="Pfam" id="PF01569">
    <property type="entry name" value="PAP2"/>
    <property type="match status" value="1"/>
</dbReference>
<dbReference type="SMART" id="SM00014">
    <property type="entry name" value="acidPPc"/>
    <property type="match status" value="1"/>
</dbReference>
<dbReference type="SUPFAM" id="SSF48317">
    <property type="entry name" value="Acid phosphatase/Vanadium-dependent haloperoxidase"/>
    <property type="match status" value="1"/>
</dbReference>
<accession>A0R627</accession>